<feature type="signal peptide" evidence="4">
    <location>
        <begin position="1"/>
        <end position="19"/>
    </location>
</feature>
<feature type="propeptide" id="PRO_0000271456" evidence="2">
    <location>
        <begin position="20"/>
        <end position="27"/>
    </location>
</feature>
<feature type="chain" id="PRO_5000050832" description="Basic phospholipase A2 beta-bungarotoxin A2 chain" evidence="2">
    <location>
        <begin position="28"/>
        <end position="146"/>
    </location>
</feature>
<feature type="active site" evidence="3">
    <location>
        <position position="75"/>
    </location>
</feature>
<feature type="active site" evidence="3">
    <location>
        <position position="120"/>
    </location>
</feature>
<feature type="binding site" evidence="2">
    <location>
        <position position="55"/>
    </location>
    <ligand>
        <name>Ca(2+)</name>
        <dbReference type="ChEBI" id="CHEBI:29108"/>
    </ligand>
</feature>
<feature type="binding site" evidence="2">
    <location>
        <position position="57"/>
    </location>
    <ligand>
        <name>Ca(2+)</name>
        <dbReference type="ChEBI" id="CHEBI:29108"/>
    </ligand>
</feature>
<feature type="binding site" evidence="2">
    <location>
        <position position="59"/>
    </location>
    <ligand>
        <name>Ca(2+)</name>
        <dbReference type="ChEBI" id="CHEBI:29108"/>
    </ligand>
</feature>
<feature type="binding site" evidence="2">
    <location>
        <position position="76"/>
    </location>
    <ligand>
        <name>Ca(2+)</name>
        <dbReference type="ChEBI" id="CHEBI:29108"/>
    </ligand>
</feature>
<feature type="disulfide bond" description="Interchain (with a B chain)" evidence="2">
    <location>
        <position position="42"/>
    </location>
</feature>
<feature type="disulfide bond" evidence="2">
    <location>
        <begin position="54"/>
        <end position="145"/>
    </location>
</feature>
<feature type="disulfide bond" evidence="2">
    <location>
        <begin position="56"/>
        <end position="72"/>
    </location>
</feature>
<feature type="disulfide bond" evidence="2">
    <location>
        <begin position="71"/>
        <end position="126"/>
    </location>
</feature>
<feature type="disulfide bond" evidence="2">
    <location>
        <begin position="78"/>
        <end position="119"/>
    </location>
</feature>
<feature type="disulfide bond" evidence="2">
    <location>
        <begin position="87"/>
        <end position="112"/>
    </location>
</feature>
<feature type="disulfide bond" evidence="2">
    <location>
        <begin position="105"/>
        <end position="117"/>
    </location>
</feature>
<evidence type="ECO:0000250" key="1"/>
<evidence type="ECO:0000250" key="2">
    <source>
        <dbReference type="UniProtKB" id="P00617"/>
    </source>
</evidence>
<evidence type="ECO:0000250" key="3">
    <source>
        <dbReference type="UniProtKB" id="P14418"/>
    </source>
</evidence>
<evidence type="ECO:0000255" key="4"/>
<evidence type="ECO:0000255" key="5">
    <source>
        <dbReference type="PROSITE-ProRule" id="PRU10035"/>
    </source>
</evidence>
<evidence type="ECO:0000255" key="6">
    <source>
        <dbReference type="PROSITE-ProRule" id="PRU10036"/>
    </source>
</evidence>
<evidence type="ECO:0000269" key="7">
    <source>
    </source>
</evidence>
<evidence type="ECO:0000305" key="8"/>
<evidence type="ECO:0000305" key="9">
    <source>
    </source>
</evidence>
<evidence type="ECO:0000312" key="10">
    <source>
        <dbReference type="EMBL" id="ADF50040.1"/>
    </source>
</evidence>
<keyword id="KW-0106">Calcium</keyword>
<keyword id="KW-1015">Disulfide bond</keyword>
<keyword id="KW-0378">Hydrolase</keyword>
<keyword id="KW-0442">Lipid degradation</keyword>
<keyword id="KW-0443">Lipid metabolism</keyword>
<keyword id="KW-0479">Metal-binding</keyword>
<keyword id="KW-0528">Neurotoxin</keyword>
<keyword id="KW-0638">Presynaptic neurotoxin</keyword>
<keyword id="KW-0964">Secreted</keyword>
<keyword id="KW-0732">Signal</keyword>
<keyword id="KW-0800">Toxin</keyword>
<proteinExistence type="evidence at protein level"/>
<protein>
    <recommendedName>
        <fullName>Basic phospholipase A2 beta-bungarotoxin A2 chain</fullName>
        <shortName>Beta-BuTX A2 chain</shortName>
        <shortName>svPLA2</shortName>
        <ecNumber>3.1.1.4</ecNumber>
    </recommendedName>
    <alternativeName>
        <fullName>Phosphatidylcholine 2-acylhydrolase</fullName>
    </alternativeName>
</protein>
<comment type="function">
    <text evidence="7">Snake venom phospholipase A2 (PLA2) that inhibits neuromuscular transmission by blocking acetylcholine release from the nerve termini. PLA2 catalyzes the calcium-dependent hydrolysis of the 2-acyl groups in 3-sn-phosphoglycerides.</text>
</comment>
<comment type="catalytic activity">
    <reaction evidence="5 6">
        <text>a 1,2-diacyl-sn-glycero-3-phosphocholine + H2O = a 1-acyl-sn-glycero-3-phosphocholine + a fatty acid + H(+)</text>
        <dbReference type="Rhea" id="RHEA:15801"/>
        <dbReference type="ChEBI" id="CHEBI:15377"/>
        <dbReference type="ChEBI" id="CHEBI:15378"/>
        <dbReference type="ChEBI" id="CHEBI:28868"/>
        <dbReference type="ChEBI" id="CHEBI:57643"/>
        <dbReference type="ChEBI" id="CHEBI:58168"/>
        <dbReference type="EC" id="3.1.1.4"/>
    </reaction>
</comment>
<comment type="cofactor">
    <cofactor evidence="1">
        <name>Ca(2+)</name>
        <dbReference type="ChEBI" id="CHEBI:29108"/>
    </cofactor>
    <text evidence="1">Binds 1 Ca(2+) ion.</text>
</comment>
<comment type="subunit">
    <text evidence="7">Heterodimer; disulfide-linked. The A chain has phospholipase A2 activity and the B chain shows homology with the basic protease inhibitors.</text>
</comment>
<comment type="subcellular location">
    <subcellularLocation>
        <location evidence="7">Secreted</location>
    </subcellularLocation>
</comment>
<comment type="tissue specificity">
    <text evidence="9">Expressed by the venom gland.</text>
</comment>
<comment type="similarity">
    <text evidence="8">Belongs to the phospholipase A2 family. Group I subfamily. D49 sub-subfamily.</text>
</comment>
<name>PA2B2_BUNFL</name>
<organism>
    <name type="scientific">Bungarus flaviceps flaviceps</name>
    <name type="common">Red-headed krait</name>
    <dbReference type="NCBI Taxonomy" id="8615"/>
    <lineage>
        <taxon>Eukaryota</taxon>
        <taxon>Metazoa</taxon>
        <taxon>Chordata</taxon>
        <taxon>Craniata</taxon>
        <taxon>Vertebrata</taxon>
        <taxon>Euteleostomi</taxon>
        <taxon>Lepidosauria</taxon>
        <taxon>Squamata</taxon>
        <taxon>Bifurcata</taxon>
        <taxon>Unidentata</taxon>
        <taxon>Episquamata</taxon>
        <taxon>Toxicofera</taxon>
        <taxon>Serpentes</taxon>
        <taxon>Colubroidea</taxon>
        <taxon>Elapidae</taxon>
        <taxon>Bungarinae</taxon>
        <taxon>Bungarus</taxon>
    </lineage>
</organism>
<sequence>MNPAHLLVLSAVCVSLLGASNIPPQSLNLLQFKDMIRCTIPCERTWGEYADYGCYCGAGGSGRPIDALDRCCYVHDNCYGDAEKRNCNPKVVSYSSKCDKRTLFCYDAPGSCARFVCDCDRTAALCFGDSEYIGRHKNIDTKRYCQ</sequence>
<dbReference type="EC" id="3.1.1.4"/>
<dbReference type="EMBL" id="AB112356">
    <property type="protein sequence ID" value="BAC77652.1"/>
    <property type="molecule type" value="mRNA"/>
</dbReference>
<dbReference type="EMBL" id="GU190820">
    <property type="protein sequence ID" value="ADF50040.1"/>
    <property type="molecule type" value="mRNA"/>
</dbReference>
<dbReference type="SMR" id="Q7T1R1"/>
<dbReference type="GO" id="GO:0005576">
    <property type="term" value="C:extracellular region"/>
    <property type="evidence" value="ECO:0007669"/>
    <property type="project" value="UniProtKB-SubCell"/>
</dbReference>
<dbReference type="GO" id="GO:0005509">
    <property type="term" value="F:calcium ion binding"/>
    <property type="evidence" value="ECO:0007669"/>
    <property type="project" value="InterPro"/>
</dbReference>
<dbReference type="GO" id="GO:0047498">
    <property type="term" value="F:calcium-dependent phospholipase A2 activity"/>
    <property type="evidence" value="ECO:0007669"/>
    <property type="project" value="TreeGrafter"/>
</dbReference>
<dbReference type="GO" id="GO:0005543">
    <property type="term" value="F:phospholipid binding"/>
    <property type="evidence" value="ECO:0007669"/>
    <property type="project" value="TreeGrafter"/>
</dbReference>
<dbReference type="GO" id="GO:0090729">
    <property type="term" value="F:toxin activity"/>
    <property type="evidence" value="ECO:0007669"/>
    <property type="project" value="UniProtKB-KW"/>
</dbReference>
<dbReference type="GO" id="GO:0050482">
    <property type="term" value="P:arachidonate secretion"/>
    <property type="evidence" value="ECO:0007669"/>
    <property type="project" value="InterPro"/>
</dbReference>
<dbReference type="GO" id="GO:0016042">
    <property type="term" value="P:lipid catabolic process"/>
    <property type="evidence" value="ECO:0007669"/>
    <property type="project" value="UniProtKB-KW"/>
</dbReference>
<dbReference type="GO" id="GO:0006644">
    <property type="term" value="P:phospholipid metabolic process"/>
    <property type="evidence" value="ECO:0007669"/>
    <property type="project" value="InterPro"/>
</dbReference>
<dbReference type="CDD" id="cd00125">
    <property type="entry name" value="PLA2c"/>
    <property type="match status" value="1"/>
</dbReference>
<dbReference type="FunFam" id="1.20.90.10:FF:000007">
    <property type="entry name" value="Acidic phospholipase A2"/>
    <property type="match status" value="1"/>
</dbReference>
<dbReference type="Gene3D" id="1.20.90.10">
    <property type="entry name" value="Phospholipase A2 domain"/>
    <property type="match status" value="1"/>
</dbReference>
<dbReference type="InterPro" id="IPR001211">
    <property type="entry name" value="PLipase_A2"/>
</dbReference>
<dbReference type="InterPro" id="IPR033112">
    <property type="entry name" value="PLipase_A2_Asp_AS"/>
</dbReference>
<dbReference type="InterPro" id="IPR016090">
    <property type="entry name" value="PLipase_A2_dom"/>
</dbReference>
<dbReference type="InterPro" id="IPR036444">
    <property type="entry name" value="PLipase_A2_dom_sf"/>
</dbReference>
<dbReference type="InterPro" id="IPR033113">
    <property type="entry name" value="PLipase_A2_His_AS"/>
</dbReference>
<dbReference type="PANTHER" id="PTHR11716:SF100">
    <property type="entry name" value="PHOSPHOLIPASE A2"/>
    <property type="match status" value="1"/>
</dbReference>
<dbReference type="PANTHER" id="PTHR11716">
    <property type="entry name" value="PHOSPHOLIPASE A2 FAMILY MEMBER"/>
    <property type="match status" value="1"/>
</dbReference>
<dbReference type="Pfam" id="PF00068">
    <property type="entry name" value="Phospholip_A2_1"/>
    <property type="match status" value="1"/>
</dbReference>
<dbReference type="PRINTS" id="PR00389">
    <property type="entry name" value="PHPHLIPASEA2"/>
</dbReference>
<dbReference type="SMART" id="SM00085">
    <property type="entry name" value="PA2c"/>
    <property type="match status" value="1"/>
</dbReference>
<dbReference type="SUPFAM" id="SSF48619">
    <property type="entry name" value="Phospholipase A2, PLA2"/>
    <property type="match status" value="1"/>
</dbReference>
<dbReference type="PROSITE" id="PS00119">
    <property type="entry name" value="PA2_ASP"/>
    <property type="match status" value="1"/>
</dbReference>
<dbReference type="PROSITE" id="PS00118">
    <property type="entry name" value="PA2_HIS"/>
    <property type="match status" value="1"/>
</dbReference>
<reference key="1">
    <citation type="journal article" date="2006" name="Toxicon">
        <title>Molecular cloning of the major lethal toxins from two kraits (Bungarus flaviceps and Bungarus candidus).</title>
        <authorList>
            <person name="Yanoshita R."/>
            <person name="Ogawa Y."/>
            <person name="Murayama N."/>
            <person name="Omori-Satoh T."/>
            <person name="Saguchi K."/>
            <person name="Higuchi S."/>
            <person name="Khow O."/>
            <person name="Chanhome L."/>
            <person name="Samejima Y."/>
            <person name="Sitprija V."/>
        </authorList>
    </citation>
    <scope>NUCLEOTIDE SEQUENCE [MRNA]</scope>
    <source>
        <tissue>Venom gland</tissue>
    </source>
</reference>
<reference evidence="10" key="2">
    <citation type="journal article" date="2010" name="BMC Mol. Biol.">
        <title>Transcriptomic analysis of the venom gland of the red-headed krait (Bungarus flaviceps) using expressed sequence tags.</title>
        <authorList>
            <person name="Siang A.S."/>
            <person name="Doley R."/>
            <person name="Vonk F.J."/>
            <person name="Kini R.M."/>
        </authorList>
    </citation>
    <scope>NUCLEOTIDE SEQUENCE [MRNA]</scope>
</reference>
<reference key="3">
    <citation type="journal article" date="2002" name="Toxicon">
        <title>Isolation of the major lethal toxin in the venom of Bungarus flaviceps.</title>
        <authorList>
            <person name="Khow O."/>
            <person name="Chanhome L."/>
            <person name="Omori-Satoh T."/>
            <person name="Sitprija V."/>
        </authorList>
    </citation>
    <scope>FUNCTION</scope>
    <scope>SUBUNIT</scope>
    <scope>SUBCELLULAR LOCATION</scope>
    <source>
        <tissue>Venom</tissue>
    </source>
</reference>
<accession>Q7T1R1</accession>
<accession>D5J9R9</accession>